<reference key="1">
    <citation type="journal article" date="1995" name="Neuron">
        <title>Cloning of AL-1, a ligand for an Eph-related tyrosine kinase receptor involved in axon bundle formation.</title>
        <authorList>
            <person name="Winslow J.W."/>
            <person name="Moran P."/>
            <person name="Valverde J."/>
            <person name="Shih A."/>
            <person name="Yuan J.Q."/>
            <person name="Wong S.C."/>
            <person name="Tsai S.P."/>
            <person name="Goddard A."/>
            <person name="Henzel W.J."/>
            <person name="Hefti F."/>
            <person name="Beck K.D."/>
            <person name="Caras I.W."/>
        </authorList>
    </citation>
    <scope>NUCLEOTIDE SEQUENCE [MRNA]</scope>
    <scope>PARTIAL PROTEIN SEQUENCE</scope>
    <source>
        <strain>Sprague-Dawley</strain>
    </source>
</reference>
<reference key="2">
    <citation type="submission" date="1998-03" db="EMBL/GenBank/DDBJ databases">
        <title>rLERK7, rat ligand for Eph-related receptor tyrosine kinase.</title>
        <authorList>
            <person name="Li Y.Y."/>
            <person name="McTiernan C.F."/>
            <person name="Feldman A.M."/>
        </authorList>
    </citation>
    <scope>NUCLEOTIDE SEQUENCE [MRNA]</scope>
    <source>
        <strain>Sprague-Dawley</strain>
    </source>
</reference>
<sequence>MLHVEMLTLLFLVLWMCVFSQDPGSKVVADRYAVYWNSSNPRFQRGDYHIDVCINDYLDVFCPHYEDSVPEDKTERYVLYMVNFDGYSACDHTSKGFKRWECNRPHSPNGPLKFSEKFQLFTPFSLGFEFRPGREYFYISSAIPDNGRRSCLKLKVFVRPTNSCMKTIGVRDRVFDVNDKVENSLEPADDTVHESAEPSRGENAAQTPRIPSRLLAILLFLLAMLLTL</sequence>
<comment type="function">
    <text evidence="1">Cell surface GPI-bound ligand for Eph receptors, a family of receptor tyrosine kinases which are crucial for migration, repulsion and adhesion during neuronal, vascular and epithelial development. Binds promiscuously Eph receptors residing on adjacent cells, leading to contact-dependent bidirectional signaling into neighboring cells. The signaling pathway downstream of the receptor is referred to as forward signaling while the signaling pathway downstream of the ephrin ligand is referred to as reverse signaling. Induces compartmentalized signaling within a caveolae-like membrane microdomain when bound to the extracellular domain of its cognate receptor. This signaling event requires the activity of the Fyn tyrosine kinase. Activates the EPHA3 receptor to regulate cell-cell adhesion and cytoskeletal organization. With the receptor EPHA2 may regulate lens fiber cells shape and interactions and be important for lens transparency maintenance. May function actively to stimulate axon fasciculation. The interaction of EFNA5 with EPHA5 also mediates communication between pancreatic islet cells to regulate glucose-stimulated insulin secretion. Cognate/functional ligand for EPHA7, their interaction regulates brain development modulating cell-cell adhesion and repulsion (By similarity).</text>
</comment>
<comment type="subunit">
    <text evidence="1">Binds to the receptor tyrosine kinases EPHA2, EPHA3, EPHB1 and EPHB2. Interacts with EPHA8; activates EPHA8. Forms a ternary EFNA5-EPHA3-ADAM10 complex mediating EFNA5 extracellular domain shedding by ADAM10 which regulates the EFNA5-EPHA3 complex internalization and function (By similarity).</text>
</comment>
<comment type="subcellular location">
    <subcellularLocation>
        <location evidence="1">Cell membrane</location>
        <topology evidence="1">Lipid-anchor</topology>
        <topology evidence="1">GPI-anchor</topology>
    </subcellularLocation>
    <subcellularLocation>
        <location evidence="1">Membrane</location>
        <location evidence="1">Caveola</location>
        <topology evidence="1">Lipid-anchor</topology>
        <topology evidence="1">GPI-anchor</topology>
    </subcellularLocation>
    <text evidence="1">Compartmentalized in discrete caveolae-like membrane microdomains.</text>
</comment>
<comment type="tissue specificity">
    <text>Expressed in brain, heart, placenta and lung.</text>
</comment>
<comment type="similarity">
    <text evidence="3">Belongs to the ephrin family.</text>
</comment>
<protein>
    <recommendedName>
        <fullName>Ephrin-A5</fullName>
    </recommendedName>
    <alternativeName>
        <fullName>AL-1</fullName>
    </alternativeName>
    <alternativeName>
        <fullName>EPH-related receptor tyrosine kinase ligand 7</fullName>
        <shortName>LERK-7</shortName>
    </alternativeName>
</protein>
<accession>P97605</accession>
<feature type="signal peptide" evidence="2">
    <location>
        <begin position="1"/>
        <end position="20"/>
    </location>
</feature>
<feature type="chain" id="PRO_0000008381" description="Ephrin-A5">
    <location>
        <begin position="21"/>
        <end position="203"/>
    </location>
</feature>
<feature type="propeptide" id="PRO_0000008382" description="Removed in mature form" evidence="2">
    <location>
        <begin position="204"/>
        <end position="228"/>
    </location>
</feature>
<feature type="domain" description="Ephrin RBD" evidence="3">
    <location>
        <begin position="29"/>
        <end position="162"/>
    </location>
</feature>
<feature type="region of interest" description="Disordered" evidence="4">
    <location>
        <begin position="186"/>
        <end position="205"/>
    </location>
</feature>
<feature type="compositionally biased region" description="Basic and acidic residues" evidence="4">
    <location>
        <begin position="190"/>
        <end position="200"/>
    </location>
</feature>
<feature type="lipid moiety-binding region" description="GPI-anchor amidated asparagine" evidence="2">
    <location>
        <position position="203"/>
    </location>
</feature>
<feature type="glycosylation site" description="N-linked (GlcNAc...) asparagine" evidence="2">
    <location>
        <position position="37"/>
    </location>
</feature>
<feature type="disulfide bond" evidence="3">
    <location>
        <begin position="62"/>
        <end position="102"/>
    </location>
</feature>
<feature type="disulfide bond" evidence="3">
    <location>
        <begin position="90"/>
        <end position="151"/>
    </location>
</feature>
<organism>
    <name type="scientific">Rattus norvegicus</name>
    <name type="common">Rat</name>
    <dbReference type="NCBI Taxonomy" id="10116"/>
    <lineage>
        <taxon>Eukaryota</taxon>
        <taxon>Metazoa</taxon>
        <taxon>Chordata</taxon>
        <taxon>Craniata</taxon>
        <taxon>Vertebrata</taxon>
        <taxon>Euteleostomi</taxon>
        <taxon>Mammalia</taxon>
        <taxon>Eutheria</taxon>
        <taxon>Euarchontoglires</taxon>
        <taxon>Glires</taxon>
        <taxon>Rodentia</taxon>
        <taxon>Myomorpha</taxon>
        <taxon>Muroidea</taxon>
        <taxon>Muridae</taxon>
        <taxon>Murinae</taxon>
        <taxon>Rattus</taxon>
    </lineage>
</organism>
<keyword id="KW-1003">Cell membrane</keyword>
<keyword id="KW-0217">Developmental protein</keyword>
<keyword id="KW-0221">Differentiation</keyword>
<keyword id="KW-0903">Direct protein sequencing</keyword>
<keyword id="KW-1015">Disulfide bond</keyword>
<keyword id="KW-0325">Glycoprotein</keyword>
<keyword id="KW-0336">GPI-anchor</keyword>
<keyword id="KW-0449">Lipoprotein</keyword>
<keyword id="KW-0472">Membrane</keyword>
<keyword id="KW-0524">Neurogenesis</keyword>
<keyword id="KW-1185">Reference proteome</keyword>
<keyword id="KW-0732">Signal</keyword>
<name>EFNA5_RAT</name>
<evidence type="ECO:0000250" key="1"/>
<evidence type="ECO:0000255" key="2"/>
<evidence type="ECO:0000255" key="3">
    <source>
        <dbReference type="PROSITE-ProRule" id="PRU00884"/>
    </source>
</evidence>
<evidence type="ECO:0000256" key="4">
    <source>
        <dbReference type="SAM" id="MobiDB-lite"/>
    </source>
</evidence>
<dbReference type="EMBL" id="U69279">
    <property type="protein sequence ID" value="AAC05801.1"/>
    <property type="molecule type" value="mRNA"/>
</dbReference>
<dbReference type="RefSeq" id="NP_446355.1">
    <property type="nucleotide sequence ID" value="NM_053903.1"/>
</dbReference>
<dbReference type="SMR" id="P97605"/>
<dbReference type="FunCoup" id="P97605">
    <property type="interactions" value="1227"/>
</dbReference>
<dbReference type="STRING" id="10116.ENSRNOP00000039406"/>
<dbReference type="GlyCosmos" id="P97605">
    <property type="glycosylation" value="1 site, No reported glycans"/>
</dbReference>
<dbReference type="GlyGen" id="P97605">
    <property type="glycosylation" value="1 site"/>
</dbReference>
<dbReference type="PhosphoSitePlus" id="P97605"/>
<dbReference type="PaxDb" id="10116-ENSRNOP00000039406"/>
<dbReference type="GeneID" id="116683"/>
<dbReference type="KEGG" id="rno:116683"/>
<dbReference type="UCSC" id="RGD:620391">
    <property type="organism name" value="rat"/>
</dbReference>
<dbReference type="AGR" id="RGD:620391"/>
<dbReference type="CTD" id="1946"/>
<dbReference type="RGD" id="620391">
    <property type="gene designation" value="Efna5"/>
</dbReference>
<dbReference type="eggNOG" id="KOG3858">
    <property type="taxonomic scope" value="Eukaryota"/>
</dbReference>
<dbReference type="InParanoid" id="P97605"/>
<dbReference type="OrthoDB" id="9650at9989"/>
<dbReference type="PhylomeDB" id="P97605"/>
<dbReference type="Reactome" id="R-RNO-2682334">
    <property type="pathway name" value="EPH-Ephrin signaling"/>
</dbReference>
<dbReference type="Reactome" id="R-RNO-3928663">
    <property type="pathway name" value="EPHA-mediated growth cone collapse"/>
</dbReference>
<dbReference type="Reactome" id="R-RNO-3928665">
    <property type="pathway name" value="EPH-ephrin mediated repulsion of cells"/>
</dbReference>
<dbReference type="PRO" id="PR:P97605"/>
<dbReference type="Proteomes" id="UP000002494">
    <property type="component" value="Unplaced"/>
</dbReference>
<dbReference type="GO" id="GO:0005912">
    <property type="term" value="C:adherens junction"/>
    <property type="evidence" value="ECO:0000266"/>
    <property type="project" value="RGD"/>
</dbReference>
<dbReference type="GO" id="GO:0005604">
    <property type="term" value="C:basement membrane"/>
    <property type="evidence" value="ECO:0000266"/>
    <property type="project" value="RGD"/>
</dbReference>
<dbReference type="GO" id="GO:0005901">
    <property type="term" value="C:caveola"/>
    <property type="evidence" value="ECO:0007669"/>
    <property type="project" value="UniProtKB-SubCell"/>
</dbReference>
<dbReference type="GO" id="GO:0071944">
    <property type="term" value="C:cell periphery"/>
    <property type="evidence" value="ECO:0000266"/>
    <property type="project" value="RGD"/>
</dbReference>
<dbReference type="GO" id="GO:0009897">
    <property type="term" value="C:external side of plasma membrane"/>
    <property type="evidence" value="ECO:0000250"/>
    <property type="project" value="UniProtKB"/>
</dbReference>
<dbReference type="GO" id="GO:0098982">
    <property type="term" value="C:GABA-ergic synapse"/>
    <property type="evidence" value="ECO:0000266"/>
    <property type="project" value="RGD"/>
</dbReference>
<dbReference type="GO" id="GO:0005886">
    <property type="term" value="C:plasma membrane"/>
    <property type="evidence" value="ECO:0000250"/>
    <property type="project" value="UniProtKB"/>
</dbReference>
<dbReference type="GO" id="GO:0045499">
    <property type="term" value="F:chemorepellent activity"/>
    <property type="evidence" value="ECO:0000266"/>
    <property type="project" value="RGD"/>
</dbReference>
<dbReference type="GO" id="GO:0046875">
    <property type="term" value="F:ephrin receptor binding"/>
    <property type="evidence" value="ECO:0000314"/>
    <property type="project" value="RGD"/>
</dbReference>
<dbReference type="GO" id="GO:0005169">
    <property type="term" value="F:neurotrophin TRKB receptor binding"/>
    <property type="evidence" value="ECO:0000266"/>
    <property type="project" value="RGD"/>
</dbReference>
<dbReference type="GO" id="GO:0007411">
    <property type="term" value="P:axon guidance"/>
    <property type="evidence" value="ECO:0000266"/>
    <property type="project" value="RGD"/>
</dbReference>
<dbReference type="GO" id="GO:0007413">
    <property type="term" value="P:axonal fasciculation"/>
    <property type="evidence" value="ECO:0000303"/>
    <property type="project" value="RGD"/>
</dbReference>
<dbReference type="GO" id="GO:0071372">
    <property type="term" value="P:cellular response to follicle-stimulating hormone stimulus"/>
    <property type="evidence" value="ECO:0000266"/>
    <property type="project" value="RGD"/>
</dbReference>
<dbReference type="GO" id="GO:1904322">
    <property type="term" value="P:cellular response to forskolin"/>
    <property type="evidence" value="ECO:0000266"/>
    <property type="project" value="RGD"/>
</dbReference>
<dbReference type="GO" id="GO:0048668">
    <property type="term" value="P:collateral sprouting"/>
    <property type="evidence" value="ECO:0000266"/>
    <property type="project" value="RGD"/>
</dbReference>
<dbReference type="GO" id="GO:0048013">
    <property type="term" value="P:ephrin receptor signaling pathway"/>
    <property type="evidence" value="ECO:0000250"/>
    <property type="project" value="UniProtKB"/>
</dbReference>
<dbReference type="GO" id="GO:1900025">
    <property type="term" value="P:negative regulation of substrate adhesion-dependent cell spreading"/>
    <property type="evidence" value="ECO:0000266"/>
    <property type="project" value="RGD"/>
</dbReference>
<dbReference type="GO" id="GO:0048672">
    <property type="term" value="P:positive regulation of collateral sprouting"/>
    <property type="evidence" value="ECO:0000266"/>
    <property type="project" value="RGD"/>
</dbReference>
<dbReference type="GO" id="GO:0050731">
    <property type="term" value="P:positive regulation of peptidyl-tyrosine phosphorylation"/>
    <property type="evidence" value="ECO:0000250"/>
    <property type="project" value="UniProtKB"/>
</dbReference>
<dbReference type="GO" id="GO:0051965">
    <property type="term" value="P:positive regulation of synapse assembly"/>
    <property type="evidence" value="ECO:0000266"/>
    <property type="project" value="RGD"/>
</dbReference>
<dbReference type="GO" id="GO:0032956">
    <property type="term" value="P:regulation of actin cytoskeleton organization"/>
    <property type="evidence" value="ECO:0000250"/>
    <property type="project" value="UniProtKB"/>
</dbReference>
<dbReference type="GO" id="GO:0022604">
    <property type="term" value="P:regulation of cell morphogenesis"/>
    <property type="evidence" value="ECO:0000266"/>
    <property type="project" value="RGD"/>
</dbReference>
<dbReference type="GO" id="GO:0022407">
    <property type="term" value="P:regulation of cell-cell adhesion"/>
    <property type="evidence" value="ECO:0000250"/>
    <property type="project" value="UniProtKB"/>
</dbReference>
<dbReference type="GO" id="GO:0051893">
    <property type="term" value="P:regulation of focal adhesion assembly"/>
    <property type="evidence" value="ECO:0000250"/>
    <property type="project" value="UniProtKB"/>
</dbReference>
<dbReference type="GO" id="GO:0043087">
    <property type="term" value="P:regulation of GTPase activity"/>
    <property type="evidence" value="ECO:0000250"/>
    <property type="project" value="UniProtKB"/>
</dbReference>
<dbReference type="GO" id="GO:0061178">
    <property type="term" value="P:regulation of insulin secretion involved in cellular response to glucose stimulus"/>
    <property type="evidence" value="ECO:0000250"/>
    <property type="project" value="UniProtKB"/>
</dbReference>
<dbReference type="GO" id="GO:0070507">
    <property type="term" value="P:regulation of microtubule cytoskeleton organization"/>
    <property type="evidence" value="ECO:0000250"/>
    <property type="project" value="UniProtKB"/>
</dbReference>
<dbReference type="GO" id="GO:0031290">
    <property type="term" value="P:retinal ganglion cell axon guidance"/>
    <property type="evidence" value="ECO:0000266"/>
    <property type="project" value="RGD"/>
</dbReference>
<dbReference type="GO" id="GO:0099560">
    <property type="term" value="P:synaptic membrane adhesion"/>
    <property type="evidence" value="ECO:0000266"/>
    <property type="project" value="RGD"/>
</dbReference>
<dbReference type="CDD" id="cd10425">
    <property type="entry name" value="Ephrin-A_Ectodomain"/>
    <property type="match status" value="1"/>
</dbReference>
<dbReference type="FunFam" id="2.60.40.420:FF:000005">
    <property type="entry name" value="Ephrin A5"/>
    <property type="match status" value="1"/>
</dbReference>
<dbReference type="Gene3D" id="2.60.40.420">
    <property type="entry name" value="Cupredoxins - blue copper proteins"/>
    <property type="match status" value="1"/>
</dbReference>
<dbReference type="InterPro" id="IPR008972">
    <property type="entry name" value="Cupredoxin"/>
</dbReference>
<dbReference type="InterPro" id="IPR031328">
    <property type="entry name" value="Ephrin"/>
</dbReference>
<dbReference type="InterPro" id="IPR034252">
    <property type="entry name" value="Ephrin-A_Ecto"/>
</dbReference>
<dbReference type="InterPro" id="IPR019765">
    <property type="entry name" value="Ephrin_CS"/>
</dbReference>
<dbReference type="InterPro" id="IPR001799">
    <property type="entry name" value="Ephrin_RBD"/>
</dbReference>
<dbReference type="PANTHER" id="PTHR11304">
    <property type="entry name" value="EPHRIN"/>
    <property type="match status" value="1"/>
</dbReference>
<dbReference type="PANTHER" id="PTHR11304:SF33">
    <property type="entry name" value="EPHRIN-A5"/>
    <property type="match status" value="1"/>
</dbReference>
<dbReference type="Pfam" id="PF00812">
    <property type="entry name" value="Ephrin"/>
    <property type="match status" value="1"/>
</dbReference>
<dbReference type="PRINTS" id="PR01347">
    <property type="entry name" value="EPHRIN"/>
</dbReference>
<dbReference type="SUPFAM" id="SSF49503">
    <property type="entry name" value="Cupredoxins"/>
    <property type="match status" value="1"/>
</dbReference>
<dbReference type="PROSITE" id="PS01299">
    <property type="entry name" value="EPHRIN_RBD_1"/>
    <property type="match status" value="1"/>
</dbReference>
<dbReference type="PROSITE" id="PS51551">
    <property type="entry name" value="EPHRIN_RBD_2"/>
    <property type="match status" value="1"/>
</dbReference>
<proteinExistence type="evidence at protein level"/>
<gene>
    <name type="primary">Efna5</name>
    <name type="synonym">Eplg7</name>
    <name type="synonym">Lerk7</name>
</gene>